<accession>Q8W032</accession>
<accession>Q9LML8</accession>
<name>CDC6B_ARATH</name>
<feature type="chain" id="PRO_0000432984" description="Cell division control protein 6 homolog B">
    <location>
        <begin position="1"/>
        <end position="505"/>
    </location>
</feature>
<feature type="region of interest" description="Disordered" evidence="2">
    <location>
        <begin position="37"/>
        <end position="72"/>
    </location>
</feature>
<feature type="compositionally biased region" description="Polar residues" evidence="2">
    <location>
        <begin position="45"/>
        <end position="54"/>
    </location>
</feature>
<protein>
    <recommendedName>
        <fullName evidence="4">Cell division control protein 6 homolog B</fullName>
        <shortName evidence="3">AtCDC6b</shortName>
    </recommendedName>
</protein>
<keyword id="KW-0131">Cell cycle</keyword>
<keyword id="KW-0132">Cell division</keyword>
<keyword id="KW-0235">DNA replication</keyword>
<keyword id="KW-0539">Nucleus</keyword>
<keyword id="KW-1185">Reference proteome</keyword>
<reference key="1">
    <citation type="journal article" date="2001" name="Plant Cell">
        <title>Expression and stability of Arabidopsis CDC6 are associated with endoreplication.</title>
        <authorList>
            <person name="Castellano M.M."/>
            <person name="del Pozo J.C."/>
            <person name="Ramirez-Parra E."/>
            <person name="Brown S."/>
            <person name="Gutierrez C."/>
        </authorList>
    </citation>
    <scope>NUCLEOTIDE SEQUENCE [MRNA]</scope>
</reference>
<reference key="2">
    <citation type="submission" date="2002-01" db="EMBL/GenBank/DDBJ databases">
        <title>Two cdc6 genes from Arabidopsis thaliana.</title>
        <authorList>
            <person name="Stevens R.G."/>
            <person name="Ruelland E."/>
            <person name="Glab N."/>
            <person name="Perennes C."/>
            <person name="Bergounioux C."/>
        </authorList>
    </citation>
    <scope>NUCLEOTIDE SEQUENCE [MRNA]</scope>
</reference>
<reference key="3">
    <citation type="journal article" date="2000" name="Nature">
        <title>Sequence and analysis of chromosome 1 of the plant Arabidopsis thaliana.</title>
        <authorList>
            <person name="Theologis A."/>
            <person name="Ecker J.R."/>
            <person name="Palm C.J."/>
            <person name="Federspiel N.A."/>
            <person name="Kaul S."/>
            <person name="White O."/>
            <person name="Alonso J."/>
            <person name="Altafi H."/>
            <person name="Araujo R."/>
            <person name="Bowman C.L."/>
            <person name="Brooks S.Y."/>
            <person name="Buehler E."/>
            <person name="Chan A."/>
            <person name="Chao Q."/>
            <person name="Chen H."/>
            <person name="Cheuk R.F."/>
            <person name="Chin C.W."/>
            <person name="Chung M.K."/>
            <person name="Conn L."/>
            <person name="Conway A.B."/>
            <person name="Conway A.R."/>
            <person name="Creasy T.H."/>
            <person name="Dewar K."/>
            <person name="Dunn P."/>
            <person name="Etgu P."/>
            <person name="Feldblyum T.V."/>
            <person name="Feng J.-D."/>
            <person name="Fong B."/>
            <person name="Fujii C.Y."/>
            <person name="Gill J.E."/>
            <person name="Goldsmith A.D."/>
            <person name="Haas B."/>
            <person name="Hansen N.F."/>
            <person name="Hughes B."/>
            <person name="Huizar L."/>
            <person name="Hunter J.L."/>
            <person name="Jenkins J."/>
            <person name="Johnson-Hopson C."/>
            <person name="Khan S."/>
            <person name="Khaykin E."/>
            <person name="Kim C.J."/>
            <person name="Koo H.L."/>
            <person name="Kremenetskaia I."/>
            <person name="Kurtz D.B."/>
            <person name="Kwan A."/>
            <person name="Lam B."/>
            <person name="Langin-Hooper S."/>
            <person name="Lee A."/>
            <person name="Lee J.M."/>
            <person name="Lenz C.A."/>
            <person name="Li J.H."/>
            <person name="Li Y.-P."/>
            <person name="Lin X."/>
            <person name="Liu S.X."/>
            <person name="Liu Z.A."/>
            <person name="Luros J.S."/>
            <person name="Maiti R."/>
            <person name="Marziali A."/>
            <person name="Militscher J."/>
            <person name="Miranda M."/>
            <person name="Nguyen M."/>
            <person name="Nierman W.C."/>
            <person name="Osborne B.I."/>
            <person name="Pai G."/>
            <person name="Peterson J."/>
            <person name="Pham P.K."/>
            <person name="Rizzo M."/>
            <person name="Rooney T."/>
            <person name="Rowley D."/>
            <person name="Sakano H."/>
            <person name="Salzberg S.L."/>
            <person name="Schwartz J.R."/>
            <person name="Shinn P."/>
            <person name="Southwick A.M."/>
            <person name="Sun H."/>
            <person name="Tallon L.J."/>
            <person name="Tambunga G."/>
            <person name="Toriumi M.J."/>
            <person name="Town C.D."/>
            <person name="Utterback T."/>
            <person name="Van Aken S."/>
            <person name="Vaysberg M."/>
            <person name="Vysotskaia V.S."/>
            <person name="Walker M."/>
            <person name="Wu D."/>
            <person name="Yu G."/>
            <person name="Fraser C.M."/>
            <person name="Venter J.C."/>
            <person name="Davis R.W."/>
        </authorList>
    </citation>
    <scope>NUCLEOTIDE SEQUENCE [LARGE SCALE GENOMIC DNA]</scope>
    <source>
        <strain>cv. Columbia</strain>
    </source>
</reference>
<reference key="4">
    <citation type="journal article" date="2017" name="Plant J.">
        <title>Araport11: a complete reannotation of the Arabidopsis thaliana reference genome.</title>
        <authorList>
            <person name="Cheng C.Y."/>
            <person name="Krishnakumar V."/>
            <person name="Chan A.P."/>
            <person name="Thibaud-Nissen F."/>
            <person name="Schobel S."/>
            <person name="Town C.D."/>
        </authorList>
    </citation>
    <scope>GENOME REANNOTATION</scope>
    <source>
        <strain>cv. Columbia</strain>
    </source>
</reference>
<evidence type="ECO:0000250" key="1">
    <source>
        <dbReference type="UniProtKB" id="O82387"/>
    </source>
</evidence>
<evidence type="ECO:0000256" key="2">
    <source>
        <dbReference type="SAM" id="MobiDB-lite"/>
    </source>
</evidence>
<evidence type="ECO:0000303" key="3">
    <source>
    </source>
</evidence>
<evidence type="ECO:0000305" key="4"/>
<evidence type="ECO:0000312" key="5">
    <source>
        <dbReference type="Araport" id="AT1G07270"/>
    </source>
</evidence>
<evidence type="ECO:0000312" key="6">
    <source>
        <dbReference type="EMBL" id="AAF82194.1"/>
    </source>
</evidence>
<dbReference type="EMBL" id="AJ310357">
    <property type="protein sequence ID" value="CAC83650.1"/>
    <property type="molecule type" value="mRNA"/>
</dbReference>
<dbReference type="EMBL" id="AJ429229">
    <property type="protein sequence ID" value="CAD22139.1"/>
    <property type="molecule type" value="mRNA"/>
</dbReference>
<dbReference type="EMBL" id="AC067971">
    <property type="protein sequence ID" value="AAF82194.1"/>
    <property type="status" value="ALT_SEQ"/>
    <property type="molecule type" value="Genomic_DNA"/>
</dbReference>
<dbReference type="EMBL" id="CP002684">
    <property type="protein sequence ID" value="AEE28099.1"/>
    <property type="molecule type" value="Genomic_DNA"/>
</dbReference>
<dbReference type="PIR" id="A86208">
    <property type="entry name" value="A86208"/>
</dbReference>
<dbReference type="RefSeq" id="NP_172207.2">
    <property type="nucleotide sequence ID" value="NM_100601.3"/>
</dbReference>
<dbReference type="SMR" id="Q8W032"/>
<dbReference type="FunCoup" id="Q8W032">
    <property type="interactions" value="2244"/>
</dbReference>
<dbReference type="STRING" id="3702.Q8W032"/>
<dbReference type="GlyGen" id="Q8W032">
    <property type="glycosylation" value="1 site"/>
</dbReference>
<dbReference type="iPTMnet" id="Q8W032"/>
<dbReference type="PaxDb" id="3702-AT1G07270.1"/>
<dbReference type="ProMEX" id="Q8W032"/>
<dbReference type="ProteomicsDB" id="224449"/>
<dbReference type="EnsemblPlants" id="AT1G07270.1">
    <property type="protein sequence ID" value="AT1G07270.1"/>
    <property type="gene ID" value="AT1G07270"/>
</dbReference>
<dbReference type="GeneID" id="837238"/>
<dbReference type="Gramene" id="AT1G07270.1">
    <property type="protein sequence ID" value="AT1G07270.1"/>
    <property type="gene ID" value="AT1G07270"/>
</dbReference>
<dbReference type="KEGG" id="ath:AT1G07270"/>
<dbReference type="Araport" id="AT1G07270"/>
<dbReference type="TAIR" id="AT1G07270">
    <property type="gene designation" value="CDC6B"/>
</dbReference>
<dbReference type="eggNOG" id="KOG2227">
    <property type="taxonomic scope" value="Eukaryota"/>
</dbReference>
<dbReference type="HOGENOM" id="CLU_012774_4_2_1"/>
<dbReference type="InParanoid" id="Q8W032"/>
<dbReference type="OMA" id="HIFKQQK"/>
<dbReference type="PhylomeDB" id="Q8W032"/>
<dbReference type="PRO" id="PR:Q8W032"/>
<dbReference type="Proteomes" id="UP000006548">
    <property type="component" value="Chromosome 1"/>
</dbReference>
<dbReference type="ExpressionAtlas" id="Q8W032">
    <property type="expression patterns" value="baseline and differential"/>
</dbReference>
<dbReference type="GO" id="GO:0005634">
    <property type="term" value="C:nucleus"/>
    <property type="evidence" value="ECO:0007669"/>
    <property type="project" value="UniProtKB-SubCell"/>
</dbReference>
<dbReference type="GO" id="GO:0016887">
    <property type="term" value="F:ATP hydrolysis activity"/>
    <property type="evidence" value="ECO:0007669"/>
    <property type="project" value="InterPro"/>
</dbReference>
<dbReference type="GO" id="GO:0051301">
    <property type="term" value="P:cell division"/>
    <property type="evidence" value="ECO:0007669"/>
    <property type="project" value="UniProtKB-KW"/>
</dbReference>
<dbReference type="GO" id="GO:0006270">
    <property type="term" value="P:DNA replication initiation"/>
    <property type="evidence" value="ECO:0007669"/>
    <property type="project" value="InterPro"/>
</dbReference>
<dbReference type="CDD" id="cd00009">
    <property type="entry name" value="AAA"/>
    <property type="match status" value="1"/>
</dbReference>
<dbReference type="CDD" id="cd08768">
    <property type="entry name" value="Cdc6_C"/>
    <property type="match status" value="1"/>
</dbReference>
<dbReference type="FunFam" id="1.10.10.10:FF:000686">
    <property type="entry name" value="Cell division control protein"/>
    <property type="match status" value="1"/>
</dbReference>
<dbReference type="FunFam" id="1.10.8.60:FF:000102">
    <property type="entry name" value="Cell division control protein"/>
    <property type="match status" value="1"/>
</dbReference>
<dbReference type="FunFam" id="3.40.50.300:FF:000547">
    <property type="entry name" value="Cell division control protein"/>
    <property type="match status" value="1"/>
</dbReference>
<dbReference type="Gene3D" id="1.10.8.60">
    <property type="match status" value="1"/>
</dbReference>
<dbReference type="Gene3D" id="3.40.50.300">
    <property type="entry name" value="P-loop containing nucleotide triphosphate hydrolases"/>
    <property type="match status" value="1"/>
</dbReference>
<dbReference type="Gene3D" id="1.10.10.10">
    <property type="entry name" value="Winged helix-like DNA-binding domain superfamily/Winged helix DNA-binding domain"/>
    <property type="match status" value="1"/>
</dbReference>
<dbReference type="InterPro" id="IPR049945">
    <property type="entry name" value="AAA_22"/>
</dbReference>
<dbReference type="InterPro" id="IPR016314">
    <property type="entry name" value="Cdc6/18"/>
</dbReference>
<dbReference type="InterPro" id="IPR015163">
    <property type="entry name" value="Cdc6_C"/>
</dbReference>
<dbReference type="InterPro" id="IPR054425">
    <property type="entry name" value="Cdc6_ORC1-like_ATPase_lid"/>
</dbReference>
<dbReference type="InterPro" id="IPR050311">
    <property type="entry name" value="ORC1/CDC6"/>
</dbReference>
<dbReference type="InterPro" id="IPR027417">
    <property type="entry name" value="P-loop_NTPase"/>
</dbReference>
<dbReference type="InterPro" id="IPR036388">
    <property type="entry name" value="WH-like_DNA-bd_sf"/>
</dbReference>
<dbReference type="InterPro" id="IPR036390">
    <property type="entry name" value="WH_DNA-bd_sf"/>
</dbReference>
<dbReference type="PANTHER" id="PTHR10763:SF26">
    <property type="entry name" value="CELL DIVISION CONTROL PROTEIN 6 HOMOLOG"/>
    <property type="match status" value="1"/>
</dbReference>
<dbReference type="PANTHER" id="PTHR10763">
    <property type="entry name" value="CELL DIVISION CONTROL PROTEIN 6-RELATED"/>
    <property type="match status" value="1"/>
</dbReference>
<dbReference type="Pfam" id="PF13401">
    <property type="entry name" value="AAA_22"/>
    <property type="match status" value="1"/>
</dbReference>
<dbReference type="Pfam" id="PF22606">
    <property type="entry name" value="Cdc6-ORC-like_ATPase_lid"/>
    <property type="match status" value="1"/>
</dbReference>
<dbReference type="Pfam" id="PF09079">
    <property type="entry name" value="Cdc6_C"/>
    <property type="match status" value="1"/>
</dbReference>
<dbReference type="PIRSF" id="PIRSF001767">
    <property type="entry name" value="Cdc6"/>
    <property type="match status" value="1"/>
</dbReference>
<dbReference type="SMART" id="SM01074">
    <property type="entry name" value="Cdc6_C"/>
    <property type="match status" value="1"/>
</dbReference>
<dbReference type="SUPFAM" id="SSF52540">
    <property type="entry name" value="P-loop containing nucleoside triphosphate hydrolases"/>
    <property type="match status" value="1"/>
</dbReference>
<dbReference type="SUPFAM" id="SSF46785">
    <property type="entry name" value="Winged helix' DNA-binding domain"/>
    <property type="match status" value="1"/>
</dbReference>
<gene>
    <name evidence="3" type="primary">CDC6B</name>
    <name evidence="5" type="ordered locus">At1g07270</name>
    <name evidence="6" type="ORF">F10K1.2</name>
</gene>
<comment type="function">
    <text evidence="1">May be involved in the initiation of DNA replication.</text>
</comment>
<comment type="subcellular location">
    <subcellularLocation>
        <location evidence="1">Nucleus</location>
    </subcellularLocation>
</comment>
<comment type="similarity">
    <text evidence="4">Belongs to the CDC6/cdc18 family.</text>
</comment>
<comment type="sequence caution" evidence="4">
    <conflict type="erroneous gene model prediction">
        <sequence resource="EMBL-CDS" id="AAF82194"/>
    </conflict>
</comment>
<sequence length="505" mass="55726">MPTNAGTSLSSYKHIVAIGTTVKSESLESAAYEIPRKRKMRSDSAAVSGNSVSTPKKLKSHLPSSVPNPGMSEKEVVEDSNEILRYPVNLAVSDCLGTKSKWSPRDEEQMRAVKEALHVSKAPSTILCREDEQIRIFEFVKGCIDQQKAGSLYICGCPGTGKSLSMEKVVQQVGDWSTQAGLPPVDTLSVNCTSLSKTTDIFSKILGEIKPGKNANTNSSPLQHLQNLFSQKQESSSSRMMLIIADEMDYLITKDRGVLYDLFMLTTLPFSRCILIGVANAIDLADRFLPKLKSLNCKPMVITFRAYSKDQILRILQERLRVLSYVAFQPKALELCARKVAAASGDMRKALCVCRSALEILEIETRGSTGPESQGPTPDDSVVRMDHMAAALSKTFKSPVVETIQSLPQHQQIIICAAAKAFRGSKKDATVGELNKLYLEICKSWMISPAGITEFTNMCTVLNDQGILKVGQARRDKLKRVSLRVDESDITFALQEIRFFRNCLL</sequence>
<organism>
    <name type="scientific">Arabidopsis thaliana</name>
    <name type="common">Mouse-ear cress</name>
    <dbReference type="NCBI Taxonomy" id="3702"/>
    <lineage>
        <taxon>Eukaryota</taxon>
        <taxon>Viridiplantae</taxon>
        <taxon>Streptophyta</taxon>
        <taxon>Embryophyta</taxon>
        <taxon>Tracheophyta</taxon>
        <taxon>Spermatophyta</taxon>
        <taxon>Magnoliopsida</taxon>
        <taxon>eudicotyledons</taxon>
        <taxon>Gunneridae</taxon>
        <taxon>Pentapetalae</taxon>
        <taxon>rosids</taxon>
        <taxon>malvids</taxon>
        <taxon>Brassicales</taxon>
        <taxon>Brassicaceae</taxon>
        <taxon>Camelineae</taxon>
        <taxon>Arabidopsis</taxon>
    </lineage>
</organism>
<proteinExistence type="evidence at transcript level"/>